<name>DRE2_ENTBH</name>
<proteinExistence type="inferred from homology"/>
<gene>
    <name type="primary">DRE2</name>
    <name type="ORF">EBI_27498</name>
</gene>
<feature type="chain" id="PRO_0000392389" description="Fe-S cluster assembly protein DRE2">
    <location>
        <begin position="1"/>
        <end position="103"/>
    </location>
</feature>
<feature type="region of interest" description="Disordered" evidence="1">
    <location>
        <begin position="19"/>
        <end position="103"/>
    </location>
</feature>
<feature type="region of interest" description="Fe-S binding site A" evidence="1">
    <location>
        <begin position="42"/>
        <end position="55"/>
    </location>
</feature>
<feature type="region of interest" description="Fe-S binding site B" evidence="1">
    <location>
        <begin position="70"/>
        <end position="84"/>
    </location>
</feature>
<feature type="short sequence motif" description="Cx2C motif 1" evidence="1">
    <location>
        <begin position="70"/>
        <end position="73"/>
    </location>
</feature>
<feature type="short sequence motif" description="Cx2C motif 2" evidence="1">
    <location>
        <begin position="81"/>
        <end position="84"/>
    </location>
</feature>
<feature type="binding site" evidence="1">
    <location>
        <position position="42"/>
    </location>
    <ligand>
        <name>[2Fe-2S] cluster</name>
        <dbReference type="ChEBI" id="CHEBI:190135"/>
    </ligand>
</feature>
<feature type="binding site" evidence="1">
    <location>
        <position position="50"/>
    </location>
    <ligand>
        <name>[2Fe-2S] cluster</name>
        <dbReference type="ChEBI" id="CHEBI:190135"/>
    </ligand>
</feature>
<feature type="binding site" evidence="1">
    <location>
        <position position="53"/>
    </location>
    <ligand>
        <name>[2Fe-2S] cluster</name>
        <dbReference type="ChEBI" id="CHEBI:190135"/>
    </ligand>
</feature>
<feature type="binding site" evidence="1">
    <location>
        <position position="55"/>
    </location>
    <ligand>
        <name>[2Fe-2S] cluster</name>
        <dbReference type="ChEBI" id="CHEBI:190135"/>
    </ligand>
</feature>
<feature type="binding site" evidence="1">
    <location>
        <position position="70"/>
    </location>
    <ligand>
        <name>[4Fe-4S] cluster</name>
        <dbReference type="ChEBI" id="CHEBI:49883"/>
    </ligand>
</feature>
<feature type="binding site" evidence="1">
    <location>
        <position position="73"/>
    </location>
    <ligand>
        <name>[4Fe-4S] cluster</name>
        <dbReference type="ChEBI" id="CHEBI:49883"/>
    </ligand>
</feature>
<feature type="binding site" evidence="1">
    <location>
        <position position="81"/>
    </location>
    <ligand>
        <name>[4Fe-4S] cluster</name>
        <dbReference type="ChEBI" id="CHEBI:49883"/>
    </ligand>
</feature>
<feature type="binding site" evidence="1">
    <location>
        <position position="84"/>
    </location>
    <ligand>
        <name>[4Fe-4S] cluster</name>
        <dbReference type="ChEBI" id="CHEBI:49883"/>
    </ligand>
</feature>
<accession>B7XHF3</accession>
<organism>
    <name type="scientific">Enterocytozoon bieneusi (strain H348)</name>
    <name type="common">Microsporidian parasite</name>
    <dbReference type="NCBI Taxonomy" id="481877"/>
    <lineage>
        <taxon>Eukaryota</taxon>
        <taxon>Fungi</taxon>
        <taxon>Fungi incertae sedis</taxon>
        <taxon>Microsporidia</taxon>
        <taxon>Enterocytozoonidae</taxon>
        <taxon>Enterocytozoon</taxon>
    </lineage>
</organism>
<comment type="function">
    <text evidence="1">Component of the cytosolic iron-sulfur (Fe-S) protein assembly (CIA) machinery required for the maturation of extramitochondrial Fe-S proteins. Part of an electron transfer chain functioning in an early step of cytosolic Fe-S biogenesis, facilitating the de novo assembly of a [4Fe-4S] cluster on the scaffold complex CFD1-NBP35. Electrons are transferred to DRE2 from NADPH via the FAD- and FMN-containing protein TAH18. TAH18-DRE2 are also required for the assembly of the diferric tyrosyl radical cofactor of ribonucleotide reductase (RNR), probably by providing electrons for reduction during radical cofactor maturation in the catalytic small subunit RNR2.</text>
</comment>
<comment type="cofactor">
    <cofactor evidence="1">
        <name>[4Fe-4S] cluster</name>
        <dbReference type="ChEBI" id="CHEBI:49883"/>
    </cofactor>
</comment>
<comment type="subunit">
    <text evidence="1">Monomer. Interacts with TAH18. Interacts with MIA40.</text>
</comment>
<comment type="subcellular location">
    <subcellularLocation>
        <location evidence="1">Cytoplasm</location>
    </subcellularLocation>
    <subcellularLocation>
        <location evidence="1">Mitochondrion intermembrane space</location>
    </subcellularLocation>
</comment>
<comment type="domain">
    <text evidence="1">The C-terminal domain binds 1 Fe-S cluster but is otherwise mostly in an intrinsically disordered conformation.</text>
</comment>
<comment type="domain">
    <text evidence="1">The twin Cx2C motifs are involved in the recognition by the mitochondrial MIA40-ERV1 disulfide relay system. The formation of 2 disulfide bonds in the Cx2C motifs through dithiol/disulfide exchange reactions effectively traps the protein in the mitochondrial intermembrane space.</text>
</comment>
<comment type="similarity">
    <text evidence="2">Belongs to the anamorsin family.</text>
</comment>
<keyword id="KW-0004">4Fe-4S</keyword>
<keyword id="KW-0963">Cytoplasm</keyword>
<keyword id="KW-0408">Iron</keyword>
<keyword id="KW-0411">Iron-sulfur</keyword>
<keyword id="KW-0479">Metal-binding</keyword>
<keyword id="KW-0496">Mitochondrion</keyword>
<dbReference type="EMBL" id="ABGB01000014">
    <property type="protein sequence ID" value="EED44690.1"/>
    <property type="molecule type" value="Genomic_DNA"/>
</dbReference>
<dbReference type="RefSeq" id="XP_002649460.1">
    <property type="nucleotide sequence ID" value="XM_002649414.1"/>
</dbReference>
<dbReference type="SMR" id="B7XHF3"/>
<dbReference type="STRING" id="481877.B7XHF3"/>
<dbReference type="VEuPathDB" id="MicrosporidiaDB:EBI_27498"/>
<dbReference type="HOGENOM" id="CLU_121509_2_0_1"/>
<dbReference type="InParanoid" id="B7XHF3"/>
<dbReference type="OMA" id="HRIPMVD"/>
<dbReference type="OrthoDB" id="311633at2759"/>
<dbReference type="GO" id="GO:0005758">
    <property type="term" value="C:mitochondrial intermembrane space"/>
    <property type="evidence" value="ECO:0007669"/>
    <property type="project" value="UniProtKB-SubCell"/>
</dbReference>
<dbReference type="GO" id="GO:0051539">
    <property type="term" value="F:4 iron, 4 sulfur cluster binding"/>
    <property type="evidence" value="ECO:0007669"/>
    <property type="project" value="UniProtKB-KW"/>
</dbReference>
<dbReference type="GO" id="GO:0046872">
    <property type="term" value="F:metal ion binding"/>
    <property type="evidence" value="ECO:0007669"/>
    <property type="project" value="UniProtKB-KW"/>
</dbReference>
<dbReference type="GO" id="GO:0016226">
    <property type="term" value="P:iron-sulfur cluster assembly"/>
    <property type="evidence" value="ECO:0007669"/>
    <property type="project" value="InterPro"/>
</dbReference>
<dbReference type="InterPro" id="IPR007785">
    <property type="entry name" value="Anamorsin"/>
</dbReference>
<dbReference type="InterPro" id="IPR046408">
    <property type="entry name" value="CIAPIN1"/>
</dbReference>
<dbReference type="PANTHER" id="PTHR13273">
    <property type="entry name" value="ANAMORSIN"/>
    <property type="match status" value="1"/>
</dbReference>
<dbReference type="PANTHER" id="PTHR13273:SF14">
    <property type="entry name" value="ANAMORSIN"/>
    <property type="match status" value="1"/>
</dbReference>
<dbReference type="Pfam" id="PF05093">
    <property type="entry name" value="CIAPIN1"/>
    <property type="match status" value="1"/>
</dbReference>
<evidence type="ECO:0000250" key="1">
    <source>
        <dbReference type="UniProtKB" id="P36152"/>
    </source>
</evidence>
<evidence type="ECO:0000305" key="2"/>
<protein>
    <recommendedName>
        <fullName>Fe-S cluster assembly protein DRE2</fullName>
    </recommendedName>
    <alternativeName>
        <fullName>Anamorsin homolog</fullName>
    </alternativeName>
</protein>
<sequence>MTSSDEELKELLKQATTYKQDPRHRIPMVDRPSKILTQSNKCRENKARKCSNCTCNKNTNTNNTIYKSKCGSCHLGDPFRCSSCPYKGLPPFNEGDEINFDEL</sequence>
<reference key="1">
    <citation type="journal article" date="2007" name="PLoS ONE">
        <title>Patterns of genome evolution among the microsporidian parasites Encephalitozoon cuniculi, Antonospora locustae and Enterocytozoon bieneusi.</title>
        <authorList>
            <person name="Corradi N."/>
            <person name="Akiyoshi D.E."/>
            <person name="Morrison H.G."/>
            <person name="Feng X."/>
            <person name="Weiss L.M."/>
            <person name="Tzipori S."/>
            <person name="Keeling P.J."/>
        </authorList>
    </citation>
    <scope>NUCLEOTIDE SEQUENCE [LARGE SCALE GENOMIC DNA]</scope>
    <source>
        <strain>H348</strain>
    </source>
</reference>
<reference key="2">
    <citation type="journal article" date="2009" name="PLoS Pathog.">
        <title>Genomic survey of the non-cultivatable opportunistic human pathogen, Enterocytozoon bieneusi.</title>
        <authorList>
            <person name="Akiyoshi D.E."/>
            <person name="Morrison H.G."/>
            <person name="Lei S."/>
            <person name="Feng X."/>
            <person name="Zhang Q."/>
            <person name="Corradi N."/>
            <person name="Mayanja H."/>
            <person name="Tumwine J.K."/>
            <person name="Keeling P.J."/>
            <person name="Weiss L.M."/>
            <person name="Tzipori S."/>
        </authorList>
    </citation>
    <scope>NUCLEOTIDE SEQUENCE [LARGE SCALE GENOMIC DNA]</scope>
    <source>
        <strain>H348</strain>
    </source>
</reference>